<proteinExistence type="inferred from homology"/>
<organism>
    <name type="scientific">Aster yellows witches'-broom phytoplasma (strain AYWB)</name>
    <dbReference type="NCBI Taxonomy" id="322098"/>
    <lineage>
        <taxon>Bacteria</taxon>
        <taxon>Bacillati</taxon>
        <taxon>Mycoplasmatota</taxon>
        <taxon>Mollicutes</taxon>
        <taxon>Acholeplasmatales</taxon>
        <taxon>Acholeplasmataceae</taxon>
        <taxon>Candidatus Phytoplasma</taxon>
        <taxon>16SrI (Aster yellows group)</taxon>
    </lineage>
</organism>
<reference key="1">
    <citation type="journal article" date="2006" name="J. Bacteriol.">
        <title>Living with genome instability: the adaptation of phytoplasmas to diverse environments of their insect and plant hosts.</title>
        <authorList>
            <person name="Bai X."/>
            <person name="Zhang J."/>
            <person name="Ewing A."/>
            <person name="Miller S.A."/>
            <person name="Jancso Radek A."/>
            <person name="Shevchenko D.V."/>
            <person name="Tsukerman K."/>
            <person name="Walunas T."/>
            <person name="Lapidus A."/>
            <person name="Campbell J.W."/>
            <person name="Hogenhout S.A."/>
        </authorList>
    </citation>
    <scope>NUCLEOTIDE SEQUENCE [LARGE SCALE GENOMIC DNA]</scope>
    <source>
        <strain>AYWB</strain>
    </source>
</reference>
<evidence type="ECO:0000255" key="1">
    <source>
        <dbReference type="HAMAP-Rule" id="MF_01458"/>
    </source>
</evidence>
<evidence type="ECO:0000256" key="2">
    <source>
        <dbReference type="SAM" id="MobiDB-lite"/>
    </source>
</evidence>
<comment type="function">
    <text evidence="1">Acts as a processive, ATP-dependent zinc metallopeptidase for both cytoplasmic and membrane proteins. Plays a role in the quality control of integral membrane proteins.</text>
</comment>
<comment type="cofactor">
    <cofactor evidence="1">
        <name>Zn(2+)</name>
        <dbReference type="ChEBI" id="CHEBI:29105"/>
    </cofactor>
    <text evidence="1">Binds 1 zinc ion per subunit.</text>
</comment>
<comment type="subunit">
    <text evidence="1">Homohexamer.</text>
</comment>
<comment type="subcellular location">
    <subcellularLocation>
        <location evidence="1">Cell membrane</location>
        <topology evidence="1">Multi-pass membrane protein</topology>
        <orientation evidence="1">Cytoplasmic side</orientation>
    </subcellularLocation>
</comment>
<comment type="similarity">
    <text evidence="1">In the central section; belongs to the AAA ATPase family.</text>
</comment>
<comment type="similarity">
    <text evidence="1">In the C-terminal section; belongs to the peptidase M41 family.</text>
</comment>
<name>FTSH_AYWBP</name>
<gene>
    <name evidence="1" type="primary">ftsH</name>
    <name type="ordered locus">AYWB_591</name>
</gene>
<feature type="chain" id="PRO_0000400326" description="ATP-dependent zinc metalloprotease FtsH">
    <location>
        <begin position="1"/>
        <end position="676"/>
    </location>
</feature>
<feature type="topological domain" description="Cytoplasmic" evidence="1">
    <location>
        <begin position="1"/>
        <end position="12"/>
    </location>
</feature>
<feature type="transmembrane region" description="Helical" evidence="1">
    <location>
        <begin position="13"/>
        <end position="33"/>
    </location>
</feature>
<feature type="topological domain" description="Extracellular" evidence="1">
    <location>
        <begin position="34"/>
        <end position="115"/>
    </location>
</feature>
<feature type="transmembrane region" description="Helical" evidence="1">
    <location>
        <begin position="116"/>
        <end position="136"/>
    </location>
</feature>
<feature type="topological domain" description="Cytoplasmic" evidence="1">
    <location>
        <begin position="137"/>
        <end position="676"/>
    </location>
</feature>
<feature type="region of interest" description="Disordered" evidence="2">
    <location>
        <begin position="610"/>
        <end position="676"/>
    </location>
</feature>
<feature type="compositionally biased region" description="Polar residues" evidence="2">
    <location>
        <begin position="615"/>
        <end position="636"/>
    </location>
</feature>
<feature type="compositionally biased region" description="Low complexity" evidence="2">
    <location>
        <begin position="650"/>
        <end position="667"/>
    </location>
</feature>
<feature type="active site" evidence="1">
    <location>
        <position position="434"/>
    </location>
</feature>
<feature type="binding site" evidence="1">
    <location>
        <begin position="212"/>
        <end position="219"/>
    </location>
    <ligand>
        <name>ATP</name>
        <dbReference type="ChEBI" id="CHEBI:30616"/>
    </ligand>
</feature>
<feature type="binding site" evidence="1">
    <location>
        <position position="433"/>
    </location>
    <ligand>
        <name>Zn(2+)</name>
        <dbReference type="ChEBI" id="CHEBI:29105"/>
        <note>catalytic</note>
    </ligand>
</feature>
<feature type="binding site" evidence="1">
    <location>
        <position position="437"/>
    </location>
    <ligand>
        <name>Zn(2+)</name>
        <dbReference type="ChEBI" id="CHEBI:29105"/>
        <note>catalytic</note>
    </ligand>
</feature>
<feature type="binding site" evidence="1">
    <location>
        <position position="509"/>
    </location>
    <ligand>
        <name>Zn(2+)</name>
        <dbReference type="ChEBI" id="CHEBI:29105"/>
        <note>catalytic</note>
    </ligand>
</feature>
<protein>
    <recommendedName>
        <fullName evidence="1">ATP-dependent zinc metalloprotease FtsH</fullName>
        <ecNumber evidence="1">3.4.24.-</ecNumber>
    </recommendedName>
</protein>
<keyword id="KW-0067">ATP-binding</keyword>
<keyword id="KW-1003">Cell membrane</keyword>
<keyword id="KW-0378">Hydrolase</keyword>
<keyword id="KW-0472">Membrane</keyword>
<keyword id="KW-0479">Metal-binding</keyword>
<keyword id="KW-0482">Metalloprotease</keyword>
<keyword id="KW-0547">Nucleotide-binding</keyword>
<keyword id="KW-0645">Protease</keyword>
<keyword id="KW-0812">Transmembrane</keyword>
<keyword id="KW-1133">Transmembrane helix</keyword>
<keyword id="KW-0862">Zinc</keyword>
<dbReference type="EC" id="3.4.24.-" evidence="1"/>
<dbReference type="EMBL" id="CP000061">
    <property type="protein sequence ID" value="ABC65708.1"/>
    <property type="molecule type" value="Genomic_DNA"/>
</dbReference>
<dbReference type="RefSeq" id="WP_011412870.1">
    <property type="nucleotide sequence ID" value="NC_007716.1"/>
</dbReference>
<dbReference type="SMR" id="Q2NIN5"/>
<dbReference type="STRING" id="322098.AYWB_591"/>
<dbReference type="KEGG" id="ayw:AYWB_591"/>
<dbReference type="eggNOG" id="COG0465">
    <property type="taxonomic scope" value="Bacteria"/>
</dbReference>
<dbReference type="HOGENOM" id="CLU_000688_16_2_14"/>
<dbReference type="OrthoDB" id="9809379at2"/>
<dbReference type="PhylomeDB" id="Q2NIN5"/>
<dbReference type="Proteomes" id="UP000001934">
    <property type="component" value="Chromosome"/>
</dbReference>
<dbReference type="GO" id="GO:0005886">
    <property type="term" value="C:plasma membrane"/>
    <property type="evidence" value="ECO:0007669"/>
    <property type="project" value="UniProtKB-SubCell"/>
</dbReference>
<dbReference type="GO" id="GO:0005524">
    <property type="term" value="F:ATP binding"/>
    <property type="evidence" value="ECO:0007669"/>
    <property type="project" value="UniProtKB-UniRule"/>
</dbReference>
<dbReference type="GO" id="GO:0016887">
    <property type="term" value="F:ATP hydrolysis activity"/>
    <property type="evidence" value="ECO:0007669"/>
    <property type="project" value="UniProtKB-UniRule"/>
</dbReference>
<dbReference type="GO" id="GO:0004176">
    <property type="term" value="F:ATP-dependent peptidase activity"/>
    <property type="evidence" value="ECO:0007669"/>
    <property type="project" value="InterPro"/>
</dbReference>
<dbReference type="GO" id="GO:0004222">
    <property type="term" value="F:metalloendopeptidase activity"/>
    <property type="evidence" value="ECO:0007669"/>
    <property type="project" value="InterPro"/>
</dbReference>
<dbReference type="GO" id="GO:0008270">
    <property type="term" value="F:zinc ion binding"/>
    <property type="evidence" value="ECO:0007669"/>
    <property type="project" value="UniProtKB-UniRule"/>
</dbReference>
<dbReference type="GO" id="GO:0030163">
    <property type="term" value="P:protein catabolic process"/>
    <property type="evidence" value="ECO:0007669"/>
    <property type="project" value="UniProtKB-UniRule"/>
</dbReference>
<dbReference type="GO" id="GO:0006508">
    <property type="term" value="P:proteolysis"/>
    <property type="evidence" value="ECO:0007669"/>
    <property type="project" value="UniProtKB-KW"/>
</dbReference>
<dbReference type="CDD" id="cd19501">
    <property type="entry name" value="RecA-like_FtsH"/>
    <property type="match status" value="1"/>
</dbReference>
<dbReference type="FunFam" id="1.10.8.60:FF:000001">
    <property type="entry name" value="ATP-dependent zinc metalloprotease FtsH"/>
    <property type="match status" value="1"/>
</dbReference>
<dbReference type="FunFam" id="1.20.58.760:FF:000001">
    <property type="entry name" value="ATP-dependent zinc metalloprotease FtsH"/>
    <property type="match status" value="1"/>
</dbReference>
<dbReference type="FunFam" id="3.40.50.300:FF:000001">
    <property type="entry name" value="ATP-dependent zinc metalloprotease FtsH"/>
    <property type="match status" value="1"/>
</dbReference>
<dbReference type="Gene3D" id="1.10.8.60">
    <property type="match status" value="1"/>
</dbReference>
<dbReference type="Gene3D" id="3.40.50.300">
    <property type="entry name" value="P-loop containing nucleotide triphosphate hydrolases"/>
    <property type="match status" value="1"/>
</dbReference>
<dbReference type="Gene3D" id="1.20.58.760">
    <property type="entry name" value="Peptidase M41"/>
    <property type="match status" value="1"/>
</dbReference>
<dbReference type="HAMAP" id="MF_01458">
    <property type="entry name" value="FtsH"/>
    <property type="match status" value="1"/>
</dbReference>
<dbReference type="InterPro" id="IPR003593">
    <property type="entry name" value="AAA+_ATPase"/>
</dbReference>
<dbReference type="InterPro" id="IPR041569">
    <property type="entry name" value="AAA_lid_3"/>
</dbReference>
<dbReference type="InterPro" id="IPR003959">
    <property type="entry name" value="ATPase_AAA_core"/>
</dbReference>
<dbReference type="InterPro" id="IPR003960">
    <property type="entry name" value="ATPase_AAA_CS"/>
</dbReference>
<dbReference type="InterPro" id="IPR005936">
    <property type="entry name" value="FtsH"/>
</dbReference>
<dbReference type="InterPro" id="IPR027417">
    <property type="entry name" value="P-loop_NTPase"/>
</dbReference>
<dbReference type="InterPro" id="IPR000642">
    <property type="entry name" value="Peptidase_M41"/>
</dbReference>
<dbReference type="InterPro" id="IPR037219">
    <property type="entry name" value="Peptidase_M41-like"/>
</dbReference>
<dbReference type="NCBIfam" id="TIGR01241">
    <property type="entry name" value="FtsH_fam"/>
    <property type="match status" value="1"/>
</dbReference>
<dbReference type="PANTHER" id="PTHR23076:SF97">
    <property type="entry name" value="ATP-DEPENDENT ZINC METALLOPROTEASE YME1L1"/>
    <property type="match status" value="1"/>
</dbReference>
<dbReference type="PANTHER" id="PTHR23076">
    <property type="entry name" value="METALLOPROTEASE M41 FTSH"/>
    <property type="match status" value="1"/>
</dbReference>
<dbReference type="Pfam" id="PF00004">
    <property type="entry name" value="AAA"/>
    <property type="match status" value="1"/>
</dbReference>
<dbReference type="Pfam" id="PF17862">
    <property type="entry name" value="AAA_lid_3"/>
    <property type="match status" value="1"/>
</dbReference>
<dbReference type="Pfam" id="PF01434">
    <property type="entry name" value="Peptidase_M41"/>
    <property type="match status" value="1"/>
</dbReference>
<dbReference type="SMART" id="SM00382">
    <property type="entry name" value="AAA"/>
    <property type="match status" value="1"/>
</dbReference>
<dbReference type="SUPFAM" id="SSF140990">
    <property type="entry name" value="FtsH protease domain-like"/>
    <property type="match status" value="1"/>
</dbReference>
<dbReference type="SUPFAM" id="SSF52540">
    <property type="entry name" value="P-loop containing nucleoside triphosphate hydrolases"/>
    <property type="match status" value="1"/>
</dbReference>
<dbReference type="PROSITE" id="PS00674">
    <property type="entry name" value="AAA"/>
    <property type="match status" value="1"/>
</dbReference>
<accession>Q2NIN5</accession>
<sequence length="676" mass="75765">MSFFDKIFKKFHMGVLYFAVILIGATFIYCYFTKHEKKDNNTFDALAQKNEIEKIQYNPIFANSAFCDIVVTTTDGRVIDFFNIPYDKVFEKKPNGKYKYNTYSVDPRPWNGYEHVFWVFRQCLTMLFFYCFFLFFADTIKQMGQEILASTSGKKGAKSRKVIINHKRFTFSDVAGADEEKEEMSELIDFLKNPRKYAAMGARIPKGVLLYGPPGTGKTLLAKAVAGEAGVPFFAASGSDFDEVYVGVGASRVRDLFKEAQLAAPCIVFIDEIEAVARKRGSNIGGSNGSEQTLNQLLVEMDGFNQKMGVIVIAATNQPEVLDSAILRPGRFDRHFNITLPNVKDREAILKLHASNKKLSEEISLEELAKQTPGFSGAQLEGTLNEAALLAARRNATFINKKDISEALDRILIGPTKKSKKYNDKEKRMVAYHEAGHAVIGIKIPFAQIVQKITIIPRGNAGGYNLMLPQEETFFSSKKALLAQITSFLGGRVAEELMFDDVSNGAYNDFKHATQIAKLMVTKYGMSDLGPVQYSGNTFQNDFSDPKGLEIDQQIQKIIANCYQQAKQIIQENQDLLDTIAKYLLEIETLNKRDIDEIVATGKIAWWEKEKEETNAPTQTTSQMSSNNETTNTDKTPLNDELEITTNLDNQESNESNPNNNEKASPEVLSTDSEQT</sequence>